<feature type="chain" id="PRO_0000116684" description="Meiotically up-regulated gene 5 protein">
    <location>
        <begin position="1"/>
        <end position="185"/>
    </location>
</feature>
<comment type="function">
    <text evidence="1">Required for correct meiotic chromosome segregation.</text>
</comment>
<comment type="subcellular location">
    <subcellularLocation>
        <location evidence="2">Cytoplasm</location>
    </subcellularLocation>
</comment>
<name>MUG5_SCHPO</name>
<accession>O13715</accession>
<dbReference type="EMBL" id="CU329670">
    <property type="protein sequence ID" value="CAB11201.2"/>
    <property type="molecule type" value="Genomic_DNA"/>
</dbReference>
<dbReference type="PIR" id="T37693">
    <property type="entry name" value="T37693"/>
</dbReference>
<dbReference type="RefSeq" id="NP_594913.2">
    <property type="nucleotide sequence ID" value="NM_001020345.2"/>
</dbReference>
<dbReference type="SMR" id="O13715"/>
<dbReference type="BioGRID" id="278192">
    <property type="interactions" value="2"/>
</dbReference>
<dbReference type="STRING" id="284812.O13715"/>
<dbReference type="PaxDb" id="4896-SPAC14C4.08.1"/>
<dbReference type="EnsemblFungi" id="SPAC14C4.08.1">
    <property type="protein sequence ID" value="SPAC14C4.08.1:pep"/>
    <property type="gene ID" value="SPAC14C4.08"/>
</dbReference>
<dbReference type="GeneID" id="2541696"/>
<dbReference type="KEGG" id="spo:2541696"/>
<dbReference type="PomBase" id="SPAC14C4.08">
    <property type="gene designation" value="mug5"/>
</dbReference>
<dbReference type="VEuPathDB" id="FungiDB:SPAC14C4.08"/>
<dbReference type="HOGENOM" id="CLU_1462151_0_0_1"/>
<dbReference type="InParanoid" id="O13715"/>
<dbReference type="PRO" id="PR:O13715"/>
<dbReference type="Proteomes" id="UP000002485">
    <property type="component" value="Chromosome I"/>
</dbReference>
<dbReference type="GO" id="GO:0005737">
    <property type="term" value="C:cytoplasm"/>
    <property type="evidence" value="ECO:0007005"/>
    <property type="project" value="PomBase"/>
</dbReference>
<dbReference type="GO" id="GO:0005829">
    <property type="term" value="C:cytosol"/>
    <property type="evidence" value="ECO:0007005"/>
    <property type="project" value="PomBase"/>
</dbReference>
<dbReference type="GO" id="GO:0005869">
    <property type="term" value="C:dynactin complex"/>
    <property type="evidence" value="ECO:0000353"/>
    <property type="project" value="PomBase"/>
</dbReference>
<dbReference type="GO" id="GO:0007059">
    <property type="term" value="P:chromosome segregation"/>
    <property type="evidence" value="ECO:0007669"/>
    <property type="project" value="UniProtKB-KW"/>
</dbReference>
<dbReference type="GO" id="GO:0030989">
    <property type="term" value="P:dynein-driven meiotic oscillatory nuclear movement"/>
    <property type="evidence" value="ECO:0000315"/>
    <property type="project" value="PomBase"/>
</dbReference>
<protein>
    <recommendedName>
        <fullName>Meiotically up-regulated gene 5 protein</fullName>
    </recommendedName>
</protein>
<gene>
    <name type="primary">mug5</name>
    <name type="ORF">SPAC14C4.08</name>
</gene>
<sequence length="185" mass="22043">MCYLSRMSSQQMQLTISGFENRIKILEDLMNEFDSNLYIRLKRECDFKLPKEYDVSIHALTILMKRHLSNMEPIDCYQDLDTGTLQTMLIFCCTLRMIEHYEKSLSNINFFSLSNDLKRLEEYNTSCSVLLSLYQRQLKKISTTIESYYLADTLRHNQNILNLCERIYNIQKLLNKREKASVLRH</sequence>
<organism>
    <name type="scientific">Schizosaccharomyces pombe (strain 972 / ATCC 24843)</name>
    <name type="common">Fission yeast</name>
    <dbReference type="NCBI Taxonomy" id="284812"/>
    <lineage>
        <taxon>Eukaryota</taxon>
        <taxon>Fungi</taxon>
        <taxon>Dikarya</taxon>
        <taxon>Ascomycota</taxon>
        <taxon>Taphrinomycotina</taxon>
        <taxon>Schizosaccharomycetes</taxon>
        <taxon>Schizosaccharomycetales</taxon>
        <taxon>Schizosaccharomycetaceae</taxon>
        <taxon>Schizosaccharomyces</taxon>
    </lineage>
</organism>
<reference key="1">
    <citation type="journal article" date="2002" name="Nature">
        <title>The genome sequence of Schizosaccharomyces pombe.</title>
        <authorList>
            <person name="Wood V."/>
            <person name="Gwilliam R."/>
            <person name="Rajandream M.A."/>
            <person name="Lyne M.H."/>
            <person name="Lyne R."/>
            <person name="Stewart A."/>
            <person name="Sgouros J.G."/>
            <person name="Peat N."/>
            <person name="Hayles J."/>
            <person name="Baker S.G."/>
            <person name="Basham D."/>
            <person name="Bowman S."/>
            <person name="Brooks K."/>
            <person name="Brown D."/>
            <person name="Brown S."/>
            <person name="Chillingworth T."/>
            <person name="Churcher C.M."/>
            <person name="Collins M."/>
            <person name="Connor R."/>
            <person name="Cronin A."/>
            <person name="Davis P."/>
            <person name="Feltwell T."/>
            <person name="Fraser A."/>
            <person name="Gentles S."/>
            <person name="Goble A."/>
            <person name="Hamlin N."/>
            <person name="Harris D.E."/>
            <person name="Hidalgo J."/>
            <person name="Hodgson G."/>
            <person name="Holroyd S."/>
            <person name="Hornsby T."/>
            <person name="Howarth S."/>
            <person name="Huckle E.J."/>
            <person name="Hunt S."/>
            <person name="Jagels K."/>
            <person name="James K.D."/>
            <person name="Jones L."/>
            <person name="Jones M."/>
            <person name="Leather S."/>
            <person name="McDonald S."/>
            <person name="McLean J."/>
            <person name="Mooney P."/>
            <person name="Moule S."/>
            <person name="Mungall K.L."/>
            <person name="Murphy L.D."/>
            <person name="Niblett D."/>
            <person name="Odell C."/>
            <person name="Oliver K."/>
            <person name="O'Neil S."/>
            <person name="Pearson D."/>
            <person name="Quail M.A."/>
            <person name="Rabbinowitsch E."/>
            <person name="Rutherford K.M."/>
            <person name="Rutter S."/>
            <person name="Saunders D."/>
            <person name="Seeger K."/>
            <person name="Sharp S."/>
            <person name="Skelton J."/>
            <person name="Simmonds M.N."/>
            <person name="Squares R."/>
            <person name="Squares S."/>
            <person name="Stevens K."/>
            <person name="Taylor K."/>
            <person name="Taylor R.G."/>
            <person name="Tivey A."/>
            <person name="Walsh S.V."/>
            <person name="Warren T."/>
            <person name="Whitehead S."/>
            <person name="Woodward J.R."/>
            <person name="Volckaert G."/>
            <person name="Aert R."/>
            <person name="Robben J."/>
            <person name="Grymonprez B."/>
            <person name="Weltjens I."/>
            <person name="Vanstreels E."/>
            <person name="Rieger M."/>
            <person name="Schaefer M."/>
            <person name="Mueller-Auer S."/>
            <person name="Gabel C."/>
            <person name="Fuchs M."/>
            <person name="Duesterhoeft A."/>
            <person name="Fritzc C."/>
            <person name="Holzer E."/>
            <person name="Moestl D."/>
            <person name="Hilbert H."/>
            <person name="Borzym K."/>
            <person name="Langer I."/>
            <person name="Beck A."/>
            <person name="Lehrach H."/>
            <person name="Reinhardt R."/>
            <person name="Pohl T.M."/>
            <person name="Eger P."/>
            <person name="Zimmermann W."/>
            <person name="Wedler H."/>
            <person name="Wambutt R."/>
            <person name="Purnelle B."/>
            <person name="Goffeau A."/>
            <person name="Cadieu E."/>
            <person name="Dreano S."/>
            <person name="Gloux S."/>
            <person name="Lelaure V."/>
            <person name="Mottier S."/>
            <person name="Galibert F."/>
            <person name="Aves S.J."/>
            <person name="Xiang Z."/>
            <person name="Hunt C."/>
            <person name="Moore K."/>
            <person name="Hurst S.M."/>
            <person name="Lucas M."/>
            <person name="Rochet M."/>
            <person name="Gaillardin C."/>
            <person name="Tallada V.A."/>
            <person name="Garzon A."/>
            <person name="Thode G."/>
            <person name="Daga R.R."/>
            <person name="Cruzado L."/>
            <person name="Jimenez J."/>
            <person name="Sanchez M."/>
            <person name="del Rey F."/>
            <person name="Benito J."/>
            <person name="Dominguez A."/>
            <person name="Revuelta J.L."/>
            <person name="Moreno S."/>
            <person name="Armstrong J."/>
            <person name="Forsburg S.L."/>
            <person name="Cerutti L."/>
            <person name="Lowe T."/>
            <person name="McCombie W.R."/>
            <person name="Paulsen I."/>
            <person name="Potashkin J."/>
            <person name="Shpakovski G.V."/>
            <person name="Ussery D."/>
            <person name="Barrell B.G."/>
            <person name="Nurse P."/>
        </authorList>
    </citation>
    <scope>NUCLEOTIDE SEQUENCE [LARGE SCALE GENOMIC DNA]</scope>
    <source>
        <strain>972 / ATCC 24843</strain>
    </source>
</reference>
<reference key="2">
    <citation type="journal article" date="2011" name="Science">
        <title>Comparative functional genomics of the fission yeasts.</title>
        <authorList>
            <person name="Rhind N."/>
            <person name="Chen Z."/>
            <person name="Yassour M."/>
            <person name="Thompson D.A."/>
            <person name="Haas B.J."/>
            <person name="Habib N."/>
            <person name="Wapinski I."/>
            <person name="Roy S."/>
            <person name="Lin M.F."/>
            <person name="Heiman D.I."/>
            <person name="Young S.K."/>
            <person name="Furuya K."/>
            <person name="Guo Y."/>
            <person name="Pidoux A."/>
            <person name="Chen H.M."/>
            <person name="Robbertse B."/>
            <person name="Goldberg J.M."/>
            <person name="Aoki K."/>
            <person name="Bayne E.H."/>
            <person name="Berlin A.M."/>
            <person name="Desjardins C.A."/>
            <person name="Dobbs E."/>
            <person name="Dukaj L."/>
            <person name="Fan L."/>
            <person name="FitzGerald M.G."/>
            <person name="French C."/>
            <person name="Gujja S."/>
            <person name="Hansen K."/>
            <person name="Keifenheim D."/>
            <person name="Levin J.Z."/>
            <person name="Mosher R.A."/>
            <person name="Mueller C.A."/>
            <person name="Pfiffner J."/>
            <person name="Priest M."/>
            <person name="Russ C."/>
            <person name="Smialowska A."/>
            <person name="Swoboda P."/>
            <person name="Sykes S.M."/>
            <person name="Vaughn M."/>
            <person name="Vengrova S."/>
            <person name="Yoder R."/>
            <person name="Zeng Q."/>
            <person name="Allshire R."/>
            <person name="Baulcombe D."/>
            <person name="Birren B.W."/>
            <person name="Brown W."/>
            <person name="Ekwall K."/>
            <person name="Kellis M."/>
            <person name="Leatherwood J."/>
            <person name="Levin H."/>
            <person name="Margalit H."/>
            <person name="Martienssen R."/>
            <person name="Nieduszynski C.A."/>
            <person name="Spatafora J.W."/>
            <person name="Friedman N."/>
            <person name="Dalgaard J.Z."/>
            <person name="Baumann P."/>
            <person name="Niki H."/>
            <person name="Regev A."/>
            <person name="Nusbaum C."/>
        </authorList>
    </citation>
    <scope>REVISION OF GENE MODEL</scope>
</reference>
<reference key="3">
    <citation type="journal article" date="2005" name="Curr. Biol.">
        <title>A large-scale screen in S. pombe identifies seven novel genes required for critical meiotic events.</title>
        <authorList>
            <person name="Martin-Castellanos C."/>
            <person name="Blanco M."/>
            <person name="Rozalen A.E."/>
            <person name="Perez-Hidalgo L."/>
            <person name="Garcia A.I."/>
            <person name="Conde F."/>
            <person name="Mata J."/>
            <person name="Ellermeier C."/>
            <person name="Davis L."/>
            <person name="San-Segundo P."/>
            <person name="Smith G.R."/>
            <person name="Moreno S."/>
        </authorList>
    </citation>
    <scope>FUNCTION IN MEIOSIS</scope>
</reference>
<reference key="4">
    <citation type="journal article" date="2006" name="Nat. Biotechnol.">
        <title>ORFeome cloning and global analysis of protein localization in the fission yeast Schizosaccharomyces pombe.</title>
        <authorList>
            <person name="Matsuyama A."/>
            <person name="Arai R."/>
            <person name="Yashiroda Y."/>
            <person name="Shirai A."/>
            <person name="Kamata A."/>
            <person name="Sekido S."/>
            <person name="Kobayashi Y."/>
            <person name="Hashimoto A."/>
            <person name="Hamamoto M."/>
            <person name="Hiraoka Y."/>
            <person name="Horinouchi S."/>
            <person name="Yoshida M."/>
        </authorList>
    </citation>
    <scope>SUBCELLULAR LOCATION [LARGE SCALE ANALYSIS]</scope>
</reference>
<keyword id="KW-0159">Chromosome partition</keyword>
<keyword id="KW-0963">Cytoplasm</keyword>
<keyword id="KW-0469">Meiosis</keyword>
<keyword id="KW-1185">Reference proteome</keyword>
<proteinExistence type="evidence at protein level"/>
<evidence type="ECO:0000269" key="1">
    <source>
    </source>
</evidence>
<evidence type="ECO:0000269" key="2">
    <source>
    </source>
</evidence>